<sequence length="320" mass="35590">MVDNNKTVDNNYKHTSVLLDEAVKGLNIRDNGIYIDGTFGRGGHSRLILSQLGPEGRLIAIDRDPEAIEAAKQITDPRFSIVHGPFSDLAHYVRDLDLVGRIDGILLDLGVSSPQLDDAERGFSFMRDGPLDMRMDPSRGLSAAEWLMKASADDIAWVLKTFGEERFAKRLAKAIVERNLTQPMTRTKELADLIANASPFRDKHKHPATRSFQAIRIYINSELEEIERALDGAHEVLAPEGRLSVISFHSLEDRIVKNFIRHHSRGPQVPAGLPLTEAQLRSMGGRTLKSVGKMMPGDAEIAENPRARSSVLRFAERIGE</sequence>
<keyword id="KW-0963">Cytoplasm</keyword>
<keyword id="KW-0489">Methyltransferase</keyword>
<keyword id="KW-0698">rRNA processing</keyword>
<keyword id="KW-0949">S-adenosyl-L-methionine</keyword>
<keyword id="KW-0808">Transferase</keyword>
<dbReference type="EC" id="2.1.1.199" evidence="1"/>
<dbReference type="EMBL" id="CP000950">
    <property type="protein sequence ID" value="ACA69793.1"/>
    <property type="molecule type" value="Genomic_DNA"/>
</dbReference>
<dbReference type="RefSeq" id="WP_002210442.1">
    <property type="nucleotide sequence ID" value="NZ_CP009792.1"/>
</dbReference>
<dbReference type="SMR" id="B1JK89"/>
<dbReference type="GeneID" id="57974068"/>
<dbReference type="KEGG" id="ypy:YPK_3526"/>
<dbReference type="PATRIC" id="fig|502800.11.peg.4269"/>
<dbReference type="GO" id="GO:0005737">
    <property type="term" value="C:cytoplasm"/>
    <property type="evidence" value="ECO:0007669"/>
    <property type="project" value="UniProtKB-SubCell"/>
</dbReference>
<dbReference type="GO" id="GO:0071424">
    <property type="term" value="F:rRNA (cytosine-N4-)-methyltransferase activity"/>
    <property type="evidence" value="ECO:0007669"/>
    <property type="project" value="UniProtKB-UniRule"/>
</dbReference>
<dbReference type="GO" id="GO:0070475">
    <property type="term" value="P:rRNA base methylation"/>
    <property type="evidence" value="ECO:0007669"/>
    <property type="project" value="UniProtKB-UniRule"/>
</dbReference>
<dbReference type="FunFam" id="1.10.150.170:FF:000001">
    <property type="entry name" value="Ribosomal RNA small subunit methyltransferase H"/>
    <property type="match status" value="1"/>
</dbReference>
<dbReference type="Gene3D" id="1.10.150.170">
    <property type="entry name" value="Putative methyltransferase TM0872, insert domain"/>
    <property type="match status" value="1"/>
</dbReference>
<dbReference type="Gene3D" id="3.40.50.150">
    <property type="entry name" value="Vaccinia Virus protein VP39"/>
    <property type="match status" value="1"/>
</dbReference>
<dbReference type="HAMAP" id="MF_01007">
    <property type="entry name" value="16SrRNA_methyltr_H"/>
    <property type="match status" value="1"/>
</dbReference>
<dbReference type="InterPro" id="IPR002903">
    <property type="entry name" value="RsmH"/>
</dbReference>
<dbReference type="InterPro" id="IPR023397">
    <property type="entry name" value="SAM-dep_MeTrfase_MraW_recog"/>
</dbReference>
<dbReference type="InterPro" id="IPR029063">
    <property type="entry name" value="SAM-dependent_MTases_sf"/>
</dbReference>
<dbReference type="NCBIfam" id="TIGR00006">
    <property type="entry name" value="16S rRNA (cytosine(1402)-N(4))-methyltransferase RsmH"/>
    <property type="match status" value="1"/>
</dbReference>
<dbReference type="PANTHER" id="PTHR11265:SF0">
    <property type="entry name" value="12S RRNA N4-METHYLCYTIDINE METHYLTRANSFERASE"/>
    <property type="match status" value="1"/>
</dbReference>
<dbReference type="PANTHER" id="PTHR11265">
    <property type="entry name" value="S-ADENOSYL-METHYLTRANSFERASE MRAW"/>
    <property type="match status" value="1"/>
</dbReference>
<dbReference type="Pfam" id="PF01795">
    <property type="entry name" value="Methyltransf_5"/>
    <property type="match status" value="1"/>
</dbReference>
<dbReference type="PIRSF" id="PIRSF004486">
    <property type="entry name" value="MraW"/>
    <property type="match status" value="1"/>
</dbReference>
<dbReference type="SUPFAM" id="SSF81799">
    <property type="entry name" value="Putative methyltransferase TM0872, insert domain"/>
    <property type="match status" value="1"/>
</dbReference>
<dbReference type="SUPFAM" id="SSF53335">
    <property type="entry name" value="S-adenosyl-L-methionine-dependent methyltransferases"/>
    <property type="match status" value="1"/>
</dbReference>
<accession>B1JK89</accession>
<name>RSMH_YERPY</name>
<protein>
    <recommendedName>
        <fullName evidence="1">Ribosomal RNA small subunit methyltransferase H</fullName>
        <ecNumber evidence="1">2.1.1.199</ecNumber>
    </recommendedName>
    <alternativeName>
        <fullName evidence="1">16S rRNA m(4)C1402 methyltransferase</fullName>
    </alternativeName>
    <alternativeName>
        <fullName evidence="1">rRNA (cytosine-N(4)-)-methyltransferase RsmH</fullName>
    </alternativeName>
</protein>
<proteinExistence type="inferred from homology"/>
<feature type="chain" id="PRO_0000387225" description="Ribosomal RNA small subunit methyltransferase H">
    <location>
        <begin position="1"/>
        <end position="320"/>
    </location>
</feature>
<feature type="binding site" evidence="1">
    <location>
        <begin position="42"/>
        <end position="44"/>
    </location>
    <ligand>
        <name>S-adenosyl-L-methionine</name>
        <dbReference type="ChEBI" id="CHEBI:59789"/>
    </ligand>
</feature>
<feature type="binding site" evidence="1">
    <location>
        <position position="62"/>
    </location>
    <ligand>
        <name>S-adenosyl-L-methionine</name>
        <dbReference type="ChEBI" id="CHEBI:59789"/>
    </ligand>
</feature>
<feature type="binding site" evidence="1">
    <location>
        <position position="86"/>
    </location>
    <ligand>
        <name>S-adenosyl-L-methionine</name>
        <dbReference type="ChEBI" id="CHEBI:59789"/>
    </ligand>
</feature>
<feature type="binding site" evidence="1">
    <location>
        <position position="108"/>
    </location>
    <ligand>
        <name>S-adenosyl-L-methionine</name>
        <dbReference type="ChEBI" id="CHEBI:59789"/>
    </ligand>
</feature>
<feature type="binding site" evidence="1">
    <location>
        <position position="115"/>
    </location>
    <ligand>
        <name>S-adenosyl-L-methionine</name>
        <dbReference type="ChEBI" id="CHEBI:59789"/>
    </ligand>
</feature>
<reference key="1">
    <citation type="submission" date="2008-02" db="EMBL/GenBank/DDBJ databases">
        <title>Complete sequence of Yersinia pseudotuberculosis YPIII.</title>
        <authorList>
            <consortium name="US DOE Joint Genome Institute"/>
            <person name="Copeland A."/>
            <person name="Lucas S."/>
            <person name="Lapidus A."/>
            <person name="Glavina del Rio T."/>
            <person name="Dalin E."/>
            <person name="Tice H."/>
            <person name="Bruce D."/>
            <person name="Goodwin L."/>
            <person name="Pitluck S."/>
            <person name="Munk A.C."/>
            <person name="Brettin T."/>
            <person name="Detter J.C."/>
            <person name="Han C."/>
            <person name="Tapia R."/>
            <person name="Schmutz J."/>
            <person name="Larimer F."/>
            <person name="Land M."/>
            <person name="Hauser L."/>
            <person name="Challacombe J.F."/>
            <person name="Green L."/>
            <person name="Lindler L.E."/>
            <person name="Nikolich M.P."/>
            <person name="Richardson P."/>
        </authorList>
    </citation>
    <scope>NUCLEOTIDE SEQUENCE [LARGE SCALE GENOMIC DNA]</scope>
    <source>
        <strain>YPIII</strain>
    </source>
</reference>
<organism>
    <name type="scientific">Yersinia pseudotuberculosis serotype O:3 (strain YPIII)</name>
    <dbReference type="NCBI Taxonomy" id="502800"/>
    <lineage>
        <taxon>Bacteria</taxon>
        <taxon>Pseudomonadati</taxon>
        <taxon>Pseudomonadota</taxon>
        <taxon>Gammaproteobacteria</taxon>
        <taxon>Enterobacterales</taxon>
        <taxon>Yersiniaceae</taxon>
        <taxon>Yersinia</taxon>
    </lineage>
</organism>
<comment type="function">
    <text evidence="1">Specifically methylates the N4 position of cytidine in position 1402 (C1402) of 16S rRNA.</text>
</comment>
<comment type="catalytic activity">
    <reaction evidence="1">
        <text>cytidine(1402) in 16S rRNA + S-adenosyl-L-methionine = N(4)-methylcytidine(1402) in 16S rRNA + S-adenosyl-L-homocysteine + H(+)</text>
        <dbReference type="Rhea" id="RHEA:42928"/>
        <dbReference type="Rhea" id="RHEA-COMP:10286"/>
        <dbReference type="Rhea" id="RHEA-COMP:10287"/>
        <dbReference type="ChEBI" id="CHEBI:15378"/>
        <dbReference type="ChEBI" id="CHEBI:57856"/>
        <dbReference type="ChEBI" id="CHEBI:59789"/>
        <dbReference type="ChEBI" id="CHEBI:74506"/>
        <dbReference type="ChEBI" id="CHEBI:82748"/>
        <dbReference type="EC" id="2.1.1.199"/>
    </reaction>
</comment>
<comment type="subcellular location">
    <subcellularLocation>
        <location evidence="1">Cytoplasm</location>
    </subcellularLocation>
</comment>
<comment type="similarity">
    <text evidence="1">Belongs to the methyltransferase superfamily. RsmH family.</text>
</comment>
<evidence type="ECO:0000255" key="1">
    <source>
        <dbReference type="HAMAP-Rule" id="MF_01007"/>
    </source>
</evidence>
<gene>
    <name evidence="1" type="primary">rsmH</name>
    <name type="synonym">mraW</name>
    <name type="ordered locus">YPK_3526</name>
</gene>